<organism>
    <name type="scientific">Porphyromonas gingivalis (strain ATCC 33277 / DSM 20709 / CIP 103683 / JCM 12257 / NCTC 11834 / 2561)</name>
    <dbReference type="NCBI Taxonomy" id="431947"/>
    <lineage>
        <taxon>Bacteria</taxon>
        <taxon>Pseudomonadati</taxon>
        <taxon>Bacteroidota</taxon>
        <taxon>Bacteroidia</taxon>
        <taxon>Bacteroidales</taxon>
        <taxon>Porphyromonadaceae</taxon>
        <taxon>Porphyromonas</taxon>
    </lineage>
</organism>
<sequence length="357" mass="40997">MDAPRINKWLKPLSALYGVGVRLRNYLFDKNVLISNSFDIPIVCVGNITIGGTGKTPHVEYLIRLLHPRYRIAVVSRGYKRKTKGMIVATEGSTAWDIGDEPRQIKRKYPDLTVIVDADRSRAIGYLCDLAEEQRPQLIVLDDGFQHRKVKADLNIVLTDYNRILTKDYLLPAGRLREPAGSIQRADMVILTKCPDDLAPIDLRAAKRDLALYPHQKLFFSKFMYGQGLKPLFSDQSPSAEVRSALAIAGIASPKLFFREIRTRFPSGTDRIYPDHHEFTDREVCLLIQDWHELHRKDANAIVVCTEKDAMRLALRQSSFPQEMQERFYYLPVEVKLMFDQEKVFVDRLLGVIQHKK</sequence>
<keyword id="KW-0067">ATP-binding</keyword>
<keyword id="KW-0418">Kinase</keyword>
<keyword id="KW-0441">Lipid A biosynthesis</keyword>
<keyword id="KW-0444">Lipid biosynthesis</keyword>
<keyword id="KW-0443">Lipid metabolism</keyword>
<keyword id="KW-0547">Nucleotide-binding</keyword>
<keyword id="KW-0808">Transferase</keyword>
<comment type="function">
    <text evidence="1">Transfers the gamma-phosphate of ATP to the 4'-position of a tetraacyldisaccharide 1-phosphate intermediate (termed DS-1-P) to form tetraacyldisaccharide 1,4'-bis-phosphate (lipid IVA).</text>
</comment>
<comment type="catalytic activity">
    <reaction evidence="1">
        <text>a lipid A disaccharide + ATP = a lipid IVA + ADP + H(+)</text>
        <dbReference type="Rhea" id="RHEA:67840"/>
        <dbReference type="ChEBI" id="CHEBI:15378"/>
        <dbReference type="ChEBI" id="CHEBI:30616"/>
        <dbReference type="ChEBI" id="CHEBI:176343"/>
        <dbReference type="ChEBI" id="CHEBI:176425"/>
        <dbReference type="ChEBI" id="CHEBI:456216"/>
        <dbReference type="EC" id="2.7.1.130"/>
    </reaction>
</comment>
<comment type="pathway">
    <text evidence="1">Glycolipid biosynthesis; lipid IV(A) biosynthesis; lipid IV(A) from (3R)-3-hydroxytetradecanoyl-[acyl-carrier-protein] and UDP-N-acetyl-alpha-D-glucosamine: step 6/6.</text>
</comment>
<comment type="similarity">
    <text evidence="1">Belongs to the LpxK family.</text>
</comment>
<proteinExistence type="inferred from homology"/>
<feature type="chain" id="PRO_1000123728" description="Tetraacyldisaccharide 4'-kinase">
    <location>
        <begin position="1"/>
        <end position="357"/>
    </location>
</feature>
<feature type="binding site" evidence="1">
    <location>
        <begin position="49"/>
        <end position="56"/>
    </location>
    <ligand>
        <name>ATP</name>
        <dbReference type="ChEBI" id="CHEBI:30616"/>
    </ligand>
</feature>
<reference key="1">
    <citation type="journal article" date="2008" name="DNA Res.">
        <title>Determination of the genome sequence of Porphyromonas gingivalis strain ATCC 33277 and genomic comparison with strain W83 revealed extensive genome rearrangements in P. gingivalis.</title>
        <authorList>
            <person name="Naito M."/>
            <person name="Hirakawa H."/>
            <person name="Yamashita A."/>
            <person name="Ohara N."/>
            <person name="Shoji M."/>
            <person name="Yukitake H."/>
            <person name="Nakayama K."/>
            <person name="Toh H."/>
            <person name="Yoshimura F."/>
            <person name="Kuhara S."/>
            <person name="Hattori M."/>
            <person name="Hayashi T."/>
            <person name="Nakayama K."/>
        </authorList>
    </citation>
    <scope>NUCLEOTIDE SEQUENCE [LARGE SCALE GENOMIC DNA]</scope>
    <source>
        <strain>ATCC 33277 / DSM 20709 / CIP 103683 / JCM 12257 / NCTC 11834 / 2561</strain>
    </source>
</reference>
<accession>B2RIK3</accession>
<protein>
    <recommendedName>
        <fullName evidence="1">Tetraacyldisaccharide 4'-kinase</fullName>
        <ecNumber evidence="1">2.7.1.130</ecNumber>
    </recommendedName>
    <alternativeName>
        <fullName evidence="1">Lipid A 4'-kinase</fullName>
    </alternativeName>
</protein>
<name>LPXK_PORG3</name>
<evidence type="ECO:0000255" key="1">
    <source>
        <dbReference type="HAMAP-Rule" id="MF_00409"/>
    </source>
</evidence>
<gene>
    <name evidence="1" type="primary">lpxK</name>
    <name type="ordered locus">PGN_0679</name>
</gene>
<dbReference type="EC" id="2.7.1.130" evidence="1"/>
<dbReference type="EMBL" id="AP009380">
    <property type="protein sequence ID" value="BAG33198.1"/>
    <property type="molecule type" value="Genomic_DNA"/>
</dbReference>
<dbReference type="RefSeq" id="WP_012457693.1">
    <property type="nucleotide sequence ID" value="NZ_CP025930.1"/>
</dbReference>
<dbReference type="SMR" id="B2RIK3"/>
<dbReference type="GeneID" id="29255902"/>
<dbReference type="KEGG" id="pgn:PGN_0679"/>
<dbReference type="eggNOG" id="COG1663">
    <property type="taxonomic scope" value="Bacteria"/>
</dbReference>
<dbReference type="HOGENOM" id="CLU_038816_6_0_10"/>
<dbReference type="OrthoDB" id="9766423at2"/>
<dbReference type="BioCyc" id="PGIN431947:G1G2V-745-MONOMER"/>
<dbReference type="UniPathway" id="UPA00359">
    <property type="reaction ID" value="UER00482"/>
</dbReference>
<dbReference type="Proteomes" id="UP000008842">
    <property type="component" value="Chromosome"/>
</dbReference>
<dbReference type="GO" id="GO:0005886">
    <property type="term" value="C:plasma membrane"/>
    <property type="evidence" value="ECO:0007669"/>
    <property type="project" value="TreeGrafter"/>
</dbReference>
<dbReference type="GO" id="GO:0005524">
    <property type="term" value="F:ATP binding"/>
    <property type="evidence" value="ECO:0007669"/>
    <property type="project" value="UniProtKB-UniRule"/>
</dbReference>
<dbReference type="GO" id="GO:0009029">
    <property type="term" value="F:tetraacyldisaccharide 4'-kinase activity"/>
    <property type="evidence" value="ECO:0007669"/>
    <property type="project" value="UniProtKB-UniRule"/>
</dbReference>
<dbReference type="GO" id="GO:0009245">
    <property type="term" value="P:lipid A biosynthetic process"/>
    <property type="evidence" value="ECO:0007669"/>
    <property type="project" value="UniProtKB-UniRule"/>
</dbReference>
<dbReference type="GO" id="GO:0009244">
    <property type="term" value="P:lipopolysaccharide core region biosynthetic process"/>
    <property type="evidence" value="ECO:0007669"/>
    <property type="project" value="TreeGrafter"/>
</dbReference>
<dbReference type="HAMAP" id="MF_00409">
    <property type="entry name" value="LpxK"/>
    <property type="match status" value="1"/>
</dbReference>
<dbReference type="InterPro" id="IPR003758">
    <property type="entry name" value="LpxK"/>
</dbReference>
<dbReference type="InterPro" id="IPR027417">
    <property type="entry name" value="P-loop_NTPase"/>
</dbReference>
<dbReference type="NCBIfam" id="TIGR00682">
    <property type="entry name" value="lpxK"/>
    <property type="match status" value="1"/>
</dbReference>
<dbReference type="PANTHER" id="PTHR42724">
    <property type="entry name" value="TETRAACYLDISACCHARIDE 4'-KINASE"/>
    <property type="match status" value="1"/>
</dbReference>
<dbReference type="PANTHER" id="PTHR42724:SF1">
    <property type="entry name" value="TETRAACYLDISACCHARIDE 4'-KINASE, MITOCHONDRIAL-RELATED"/>
    <property type="match status" value="1"/>
</dbReference>
<dbReference type="Pfam" id="PF02606">
    <property type="entry name" value="LpxK"/>
    <property type="match status" value="1"/>
</dbReference>
<dbReference type="SUPFAM" id="SSF52540">
    <property type="entry name" value="P-loop containing nucleoside triphosphate hydrolases"/>
    <property type="match status" value="1"/>
</dbReference>